<comment type="function">
    <text evidence="3">May contribute to floral scent emission.</text>
</comment>
<comment type="catalytic activity">
    <reaction evidence="3">
        <text>(2E)-geranyl diphosphate = tricyclene + diphosphate</text>
        <dbReference type="Rhea" id="RHEA:32687"/>
        <dbReference type="ChEBI" id="CHEBI:33019"/>
        <dbReference type="ChEBI" id="CHEBI:58057"/>
        <dbReference type="ChEBI" id="CHEBI:64266"/>
        <dbReference type="EC" id="4.2.3.105"/>
    </reaction>
</comment>
<comment type="catalytic activity">
    <reaction evidence="3">
        <text>(2E)-geranyl diphosphate = beta-myrcene + diphosphate</text>
        <dbReference type="Rhea" id="RHEA:16965"/>
        <dbReference type="ChEBI" id="CHEBI:17221"/>
        <dbReference type="ChEBI" id="CHEBI:33019"/>
        <dbReference type="ChEBI" id="CHEBI:58057"/>
        <dbReference type="EC" id="4.2.3.15"/>
    </reaction>
</comment>
<comment type="cofactor">
    <cofactor evidence="1">
        <name>Mg(2+)</name>
        <dbReference type="ChEBI" id="CHEBI:18420"/>
    </cofactor>
    <cofactor evidence="1">
        <name>Mn(2+)</name>
        <dbReference type="ChEBI" id="CHEBI:29035"/>
    </cofactor>
    <text evidence="1">Binds 3 Mg(2+) or Mn(2+) ions per subunit.</text>
</comment>
<comment type="pathway">
    <text>Secondary metabolite biosynthesis; terpenoid biosynthesis.</text>
</comment>
<comment type="subcellular location">
    <subcellularLocation>
        <location evidence="1">Plastid</location>
        <location evidence="1">Chloroplast stroma</location>
    </subcellularLocation>
</comment>
<comment type="tissue specificity">
    <text evidence="3">Accumulates at low levels in flowers; mostly expressed in both upper and lower petal lobes, and, to a lower extent, in tube and stamens.</text>
</comment>
<comment type="developmental stage">
    <text evidence="3">First observed in mature flower buds and accumulates transiently during 4 days after anthesis.</text>
</comment>
<comment type="induction">
    <text>Circadian-regulation with highest levels in early afternoon and lowest level during the night.</text>
</comment>
<comment type="domain">
    <text>The Asp-Asp-Xaa-Xaa-Asp/Glu (DDXXD/E) motif is important for the catalytic activity, presumably through binding to Mg(2+).</text>
</comment>
<comment type="similarity">
    <text evidence="4">Belongs to the terpene synthase family. Tpsg subfamily.</text>
</comment>
<dbReference type="EC" id="4.2.3.105"/>
<dbReference type="EC" id="4.2.3.15"/>
<dbReference type="EMBL" id="AY195609">
    <property type="protein sequence ID" value="AAO41727.1"/>
    <property type="molecule type" value="mRNA"/>
</dbReference>
<dbReference type="SMR" id="Q84NC9"/>
<dbReference type="GlyCosmos" id="Q84NC9">
    <property type="glycosylation" value="6 sites, No reported glycans"/>
</dbReference>
<dbReference type="UniPathway" id="UPA00213"/>
<dbReference type="GO" id="GO:0009570">
    <property type="term" value="C:chloroplast stroma"/>
    <property type="evidence" value="ECO:0000250"/>
    <property type="project" value="UniProtKB"/>
</dbReference>
<dbReference type="GO" id="GO:0000287">
    <property type="term" value="F:magnesium ion binding"/>
    <property type="evidence" value="ECO:0007669"/>
    <property type="project" value="InterPro"/>
</dbReference>
<dbReference type="GO" id="GO:0050551">
    <property type="term" value="F:myrcene synthase activity"/>
    <property type="evidence" value="ECO:0007669"/>
    <property type="project" value="UniProtKB-EC"/>
</dbReference>
<dbReference type="GO" id="GO:0010333">
    <property type="term" value="F:terpene synthase activity"/>
    <property type="evidence" value="ECO:0000250"/>
    <property type="project" value="UniProtKB"/>
</dbReference>
<dbReference type="GO" id="GO:0102701">
    <property type="term" value="F:tricyclene synthase activity"/>
    <property type="evidence" value="ECO:0007669"/>
    <property type="project" value="UniProtKB-EC"/>
</dbReference>
<dbReference type="GO" id="GO:0016114">
    <property type="term" value="P:terpenoid biosynthetic process"/>
    <property type="evidence" value="ECO:0007669"/>
    <property type="project" value="UniProtKB-UniPathway"/>
</dbReference>
<dbReference type="FunFam" id="1.10.600.10:FF:000005">
    <property type="entry name" value="Ent-kaur-16-ene synthase, chloroplastic"/>
    <property type="match status" value="1"/>
</dbReference>
<dbReference type="FunFam" id="1.50.10.130:FF:000012">
    <property type="entry name" value="Tricyclene synthase 1e20, chloroplastic"/>
    <property type="match status" value="1"/>
</dbReference>
<dbReference type="Gene3D" id="1.10.600.10">
    <property type="entry name" value="Farnesyl Diphosphate Synthase"/>
    <property type="match status" value="1"/>
</dbReference>
<dbReference type="Gene3D" id="1.50.10.130">
    <property type="entry name" value="Terpene synthase, N-terminal domain"/>
    <property type="match status" value="1"/>
</dbReference>
<dbReference type="InterPro" id="IPR008949">
    <property type="entry name" value="Isoprenoid_synthase_dom_sf"/>
</dbReference>
<dbReference type="InterPro" id="IPR034741">
    <property type="entry name" value="Terpene_cyclase-like_1_C"/>
</dbReference>
<dbReference type="InterPro" id="IPR001906">
    <property type="entry name" value="Terpene_synth_N"/>
</dbReference>
<dbReference type="InterPro" id="IPR036965">
    <property type="entry name" value="Terpene_synth_N_sf"/>
</dbReference>
<dbReference type="InterPro" id="IPR050148">
    <property type="entry name" value="Terpene_synthase-like"/>
</dbReference>
<dbReference type="InterPro" id="IPR005630">
    <property type="entry name" value="Terpene_synthase_metal-bd"/>
</dbReference>
<dbReference type="InterPro" id="IPR008930">
    <property type="entry name" value="Terpenoid_cyclase/PrenylTrfase"/>
</dbReference>
<dbReference type="PANTHER" id="PTHR31225">
    <property type="entry name" value="OS04G0344100 PROTEIN-RELATED"/>
    <property type="match status" value="1"/>
</dbReference>
<dbReference type="PANTHER" id="PTHR31225:SF0">
    <property type="entry name" value="S-(+)-LINALOOL SYNTHASE, CHLOROPLASTIC"/>
    <property type="match status" value="1"/>
</dbReference>
<dbReference type="Pfam" id="PF01397">
    <property type="entry name" value="Terpene_synth"/>
    <property type="match status" value="1"/>
</dbReference>
<dbReference type="Pfam" id="PF03936">
    <property type="entry name" value="Terpene_synth_C"/>
    <property type="match status" value="1"/>
</dbReference>
<dbReference type="SFLD" id="SFLDS00005">
    <property type="entry name" value="Isoprenoid_Synthase_Type_I"/>
    <property type="match status" value="1"/>
</dbReference>
<dbReference type="SFLD" id="SFLDG01019">
    <property type="entry name" value="Terpene_Cyclase_Like_1_C_Termi"/>
    <property type="match status" value="1"/>
</dbReference>
<dbReference type="SUPFAM" id="SSF48239">
    <property type="entry name" value="Terpenoid cyclases/Protein prenyltransferases"/>
    <property type="match status" value="1"/>
</dbReference>
<dbReference type="SUPFAM" id="SSF48576">
    <property type="entry name" value="Terpenoid synthases"/>
    <property type="match status" value="1"/>
</dbReference>
<evidence type="ECO:0000250" key="1"/>
<evidence type="ECO:0000255" key="2"/>
<evidence type="ECO:0000269" key="3">
    <source>
    </source>
</evidence>
<evidence type="ECO:0000305" key="4"/>
<feature type="transit peptide" description="Chloroplast" evidence="2">
    <location>
        <begin position="1"/>
        <end position="45"/>
    </location>
</feature>
<feature type="chain" id="PRO_0000418163" description="Tricyclene synthase 1e20, chloroplastic">
    <location>
        <begin position="46"/>
        <end position="584"/>
    </location>
</feature>
<feature type="short sequence motif" description="DDXXD motif">
    <location>
        <begin position="341"/>
        <end position="345"/>
    </location>
</feature>
<feature type="binding site" evidence="1">
    <location>
        <position position="341"/>
    </location>
    <ligand>
        <name>Mg(2+)</name>
        <dbReference type="ChEBI" id="CHEBI:18420"/>
        <label>1</label>
    </ligand>
</feature>
<feature type="binding site" evidence="1">
    <location>
        <position position="341"/>
    </location>
    <ligand>
        <name>Mg(2+)</name>
        <dbReference type="ChEBI" id="CHEBI:18420"/>
        <label>2</label>
    </ligand>
</feature>
<feature type="binding site" evidence="1">
    <location>
        <position position="345"/>
    </location>
    <ligand>
        <name>Mg(2+)</name>
        <dbReference type="ChEBI" id="CHEBI:18420"/>
        <label>1</label>
    </ligand>
</feature>
<feature type="binding site" evidence="1">
    <location>
        <position position="345"/>
    </location>
    <ligand>
        <name>Mg(2+)</name>
        <dbReference type="ChEBI" id="CHEBI:18420"/>
        <label>2</label>
    </ligand>
</feature>
<feature type="binding site" evidence="1">
    <location>
        <position position="485"/>
    </location>
    <ligand>
        <name>Mg(2+)</name>
        <dbReference type="ChEBI" id="CHEBI:18420"/>
        <label>3</label>
    </ligand>
</feature>
<feature type="binding site" evidence="1">
    <location>
        <position position="489"/>
    </location>
    <ligand>
        <name>Mg(2+)</name>
        <dbReference type="ChEBI" id="CHEBI:18420"/>
        <label>3</label>
    </ligand>
</feature>
<feature type="binding site" evidence="1">
    <location>
        <position position="493"/>
    </location>
    <ligand>
        <name>Mg(2+)</name>
        <dbReference type="ChEBI" id="CHEBI:18420"/>
        <label>3</label>
    </ligand>
</feature>
<feature type="glycosylation site" description="N-linked (GlcNAc...) asparagine" evidence="2">
    <location>
        <position position="30"/>
    </location>
</feature>
<feature type="glycosylation site" description="N-linked (GlcNAc...) asparagine" evidence="2">
    <location>
        <position position="209"/>
    </location>
</feature>
<feature type="glycosylation site" description="N-linked (GlcNAc...) asparagine" evidence="2">
    <location>
        <position position="322"/>
    </location>
</feature>
<feature type="glycosylation site" description="N-linked (GlcNAc...) asparagine" evidence="2">
    <location>
        <position position="387"/>
    </location>
</feature>
<feature type="glycosylation site" description="N-linked (GlcNAc...) asparagine" evidence="2">
    <location>
        <position position="468"/>
    </location>
</feature>
<feature type="glycosylation site" description="N-linked (GlcNAc...) asparagine" evidence="2">
    <location>
        <position position="512"/>
    </location>
</feature>
<accession>Q84NC9</accession>
<sequence length="584" mass="67339">MIYIWICFYLQTTLLPCSLSTRTKFAICHNTSKLHRAAYKTSRWNIPGDVGSTPPPSKLHQALCLNEHSLSCMAELPMDYEGKIKETRHLLHLKGENDPIESLIFVDATLRLGVNHHFQKEIEEILRKSYATMKSPIICEYHTLHEVSLFFRLMRQHGRYVSADVFNNFKGESGRFKEELKRDTRGLVELYEAAQLSFEGERILDEAENFSRQILHGNLAGMEDNLRRSVGNKLRYPFHTSIARFTGRNYDDDLGGMYEWGKTLRELALMDLQVERSVYQEELLQVSKWWNELGLYKKLNLARNRPFEFYTWSMVILADYINLSEQRVELTKSVAFIYLIDDIFDVYGTLDELIIFTEAVNKWDYSATDTLPENMKMCCMTLLDTINGTSQKIYEKHGYNPIDSLKTTWKSLCSAFLVEAKWSASGSLPSANEYLENEKVSSGVYVVLVHLFCLMGLGGTSRGSIELNDTQELMSSIAIIFRLWNDLGSAKNEHQNGKDGSYLNCYKKEHINLTAAQAHEHALELVAIEWKRLNKESFNLNHDSVSSFKQAALNLARMVPLMYSYDHNQRGPVLEEYVKFMLSD</sequence>
<gene>
    <name type="primary">1e20</name>
</gene>
<name>TPS3_ANTMA</name>
<protein>
    <recommendedName>
        <fullName>Tricyclene synthase 1e20, chloroplastic</fullName>
        <shortName>Am1e20</shortName>
        <ecNumber>4.2.3.105</ecNumber>
    </recommendedName>
    <alternativeName>
        <fullName>Myrcene synthase 1e20</fullName>
        <ecNumber>4.2.3.15</ecNumber>
    </alternativeName>
    <alternativeName>
        <fullName>Terpenoid synthase 1e20</fullName>
    </alternativeName>
</protein>
<keyword id="KW-0150">Chloroplast</keyword>
<keyword id="KW-0325">Glycoprotein</keyword>
<keyword id="KW-0456">Lyase</keyword>
<keyword id="KW-0460">Magnesium</keyword>
<keyword id="KW-0464">Manganese</keyword>
<keyword id="KW-0479">Metal-binding</keyword>
<keyword id="KW-0934">Plastid</keyword>
<keyword id="KW-0809">Transit peptide</keyword>
<proteinExistence type="evidence at protein level"/>
<organism>
    <name type="scientific">Antirrhinum majus</name>
    <name type="common">Garden snapdragon</name>
    <dbReference type="NCBI Taxonomy" id="4151"/>
    <lineage>
        <taxon>Eukaryota</taxon>
        <taxon>Viridiplantae</taxon>
        <taxon>Streptophyta</taxon>
        <taxon>Embryophyta</taxon>
        <taxon>Tracheophyta</taxon>
        <taxon>Spermatophyta</taxon>
        <taxon>Magnoliopsida</taxon>
        <taxon>eudicotyledons</taxon>
        <taxon>Gunneridae</taxon>
        <taxon>Pentapetalae</taxon>
        <taxon>asterids</taxon>
        <taxon>lamiids</taxon>
        <taxon>Lamiales</taxon>
        <taxon>Plantaginaceae</taxon>
        <taxon>Antirrhineae</taxon>
        <taxon>Antirrhinum</taxon>
    </lineage>
</organism>
<reference key="1">
    <citation type="journal article" date="2003" name="Plant Cell">
        <title>(E)-beta-ocimene and myrcene synthase genes of floral scent biosynthesis in snapdragon: function and expression of three terpene synthase genes of a new terpene synthase subfamily.</title>
        <authorList>
            <person name="Dudareva N."/>
            <person name="Martin D."/>
            <person name="Kish C.M."/>
            <person name="Kolosova N."/>
            <person name="Gorenstein N."/>
            <person name="Faeldt J."/>
            <person name="Miller B."/>
            <person name="Bohlmann J."/>
        </authorList>
    </citation>
    <scope>NUCLEOTIDE SEQUENCE [MRNA]</scope>
    <scope>FUNCTION</scope>
    <scope>TISSUE SPECIFICITY</scope>
    <scope>DEVELOPMENTAL STAGE</scope>
    <scope>CATALYTIC ACTIVITY</scope>
    <scope>CIRCADIAN-REGULATION</scope>
    <source>
        <tissue>Petal</tissue>
    </source>
</reference>